<comment type="function">
    <text evidence="1">Necessary for formate dehydrogenase activity.</text>
</comment>
<comment type="subcellular location">
    <subcellularLocation>
        <location evidence="1">Cytoplasm</location>
    </subcellularLocation>
</comment>
<comment type="similarity">
    <text evidence="1">Belongs to the FdhE family.</text>
</comment>
<organism>
    <name type="scientific">Escherichia coli (strain SE11)</name>
    <dbReference type="NCBI Taxonomy" id="409438"/>
    <lineage>
        <taxon>Bacteria</taxon>
        <taxon>Pseudomonadati</taxon>
        <taxon>Pseudomonadota</taxon>
        <taxon>Gammaproteobacteria</taxon>
        <taxon>Enterobacterales</taxon>
        <taxon>Enterobacteriaceae</taxon>
        <taxon>Escherichia</taxon>
    </lineage>
</organism>
<gene>
    <name evidence="1" type="primary">fdhE</name>
    <name type="ordered locus">ECSE_4177</name>
</gene>
<accession>B6I4N1</accession>
<dbReference type="EMBL" id="AP009240">
    <property type="protein sequence ID" value="BAG79701.1"/>
    <property type="molecule type" value="Genomic_DNA"/>
</dbReference>
<dbReference type="RefSeq" id="WP_000027708.1">
    <property type="nucleotide sequence ID" value="NC_011415.1"/>
</dbReference>
<dbReference type="SMR" id="B6I4N1"/>
<dbReference type="GeneID" id="93778047"/>
<dbReference type="KEGG" id="ecy:ECSE_4177"/>
<dbReference type="HOGENOM" id="CLU_055275_0_0_6"/>
<dbReference type="Proteomes" id="UP000008199">
    <property type="component" value="Chromosome"/>
</dbReference>
<dbReference type="GO" id="GO:0005829">
    <property type="term" value="C:cytosol"/>
    <property type="evidence" value="ECO:0007669"/>
    <property type="project" value="TreeGrafter"/>
</dbReference>
<dbReference type="GO" id="GO:0008199">
    <property type="term" value="F:ferric iron binding"/>
    <property type="evidence" value="ECO:0007669"/>
    <property type="project" value="TreeGrafter"/>
</dbReference>
<dbReference type="GO" id="GO:0051604">
    <property type="term" value="P:protein maturation"/>
    <property type="evidence" value="ECO:0007669"/>
    <property type="project" value="TreeGrafter"/>
</dbReference>
<dbReference type="CDD" id="cd16341">
    <property type="entry name" value="FdhE"/>
    <property type="match status" value="1"/>
</dbReference>
<dbReference type="FunFam" id="3.90.1670.10:FF:000001">
    <property type="entry name" value="Protein FdhE"/>
    <property type="match status" value="1"/>
</dbReference>
<dbReference type="Gene3D" id="3.90.1670.10">
    <property type="entry name" value="FdhE-like domain"/>
    <property type="match status" value="1"/>
</dbReference>
<dbReference type="HAMAP" id="MF_00611">
    <property type="entry name" value="FdeH"/>
    <property type="match status" value="1"/>
</dbReference>
<dbReference type="InterPro" id="IPR024064">
    <property type="entry name" value="FdhE-like_sf"/>
</dbReference>
<dbReference type="InterPro" id="IPR056796">
    <property type="entry name" value="FdhE_C"/>
</dbReference>
<dbReference type="InterPro" id="IPR056797">
    <property type="entry name" value="FdhE_central"/>
</dbReference>
<dbReference type="InterPro" id="IPR056774">
    <property type="entry name" value="FdhE_N"/>
</dbReference>
<dbReference type="InterPro" id="IPR006452">
    <property type="entry name" value="Formate_DH_accessory"/>
</dbReference>
<dbReference type="NCBIfam" id="TIGR01562">
    <property type="entry name" value="FdhE"/>
    <property type="match status" value="1"/>
</dbReference>
<dbReference type="NCBIfam" id="NF002925">
    <property type="entry name" value="PRK03564.1"/>
    <property type="match status" value="1"/>
</dbReference>
<dbReference type="PANTHER" id="PTHR37689">
    <property type="entry name" value="PROTEIN FDHE"/>
    <property type="match status" value="1"/>
</dbReference>
<dbReference type="PANTHER" id="PTHR37689:SF1">
    <property type="entry name" value="PROTEIN FDHE"/>
    <property type="match status" value="1"/>
</dbReference>
<dbReference type="Pfam" id="PF24860">
    <property type="entry name" value="FdhE_C"/>
    <property type="match status" value="1"/>
</dbReference>
<dbReference type="Pfam" id="PF24859">
    <property type="entry name" value="FdhE_central"/>
    <property type="match status" value="1"/>
</dbReference>
<dbReference type="Pfam" id="PF04216">
    <property type="entry name" value="FdhE_N"/>
    <property type="match status" value="1"/>
</dbReference>
<dbReference type="PIRSF" id="PIRSF018296">
    <property type="entry name" value="Format_dh_formtn"/>
    <property type="match status" value="1"/>
</dbReference>
<dbReference type="SUPFAM" id="SSF144020">
    <property type="entry name" value="FdhE-like"/>
    <property type="match status" value="1"/>
</dbReference>
<evidence type="ECO:0000255" key="1">
    <source>
        <dbReference type="HAMAP-Rule" id="MF_00611"/>
    </source>
</evidence>
<reference key="1">
    <citation type="journal article" date="2008" name="DNA Res.">
        <title>Complete genome sequence and comparative analysis of the wild-type commensal Escherichia coli strain SE11 isolated from a healthy adult.</title>
        <authorList>
            <person name="Oshima K."/>
            <person name="Toh H."/>
            <person name="Ogura Y."/>
            <person name="Sasamoto H."/>
            <person name="Morita H."/>
            <person name="Park S.-H."/>
            <person name="Ooka T."/>
            <person name="Iyoda S."/>
            <person name="Taylor T.D."/>
            <person name="Hayashi T."/>
            <person name="Itoh K."/>
            <person name="Hattori M."/>
        </authorList>
    </citation>
    <scope>NUCLEOTIDE SEQUENCE [LARGE SCALE GENOMIC DNA]</scope>
    <source>
        <strain>SE11</strain>
    </source>
</reference>
<feature type="chain" id="PRO_1000130359" description="Protein FdhE">
    <location>
        <begin position="1"/>
        <end position="309"/>
    </location>
</feature>
<name>FDHE_ECOSE</name>
<keyword id="KW-0963">Cytoplasm</keyword>
<sequence length="309" mass="34689">MSIRIIPQDELGSSEKRTADMIPPLLFPRLKNLYNRRAERLRELAENNPLGDYLRFAALIAHAQEVVLYDHPLEMDLTARIKEASAQGKPPLDIHVLPRDKHWQKLLMALIAELKPEMSGPALAVIENLEKASTQELEDMASALFASDFSSVSSDKAPFIWAALSLYWAQMANLIPGKARAEYGEQRQYCPVCGSMPVSSMVQIGTTQGLRYLHCNLCETEWHVVRVKCSNCEQSGKLHYWSLDDEQAAIKAESCDDCGTYLKILYQEKEPKVEAVADDLASLVLDARMEQEGYARSSINPFLFPGEGE</sequence>
<protein>
    <recommendedName>
        <fullName evidence="1">Protein FdhE</fullName>
    </recommendedName>
</protein>
<proteinExistence type="inferred from homology"/>